<sequence length="628" mass="68404">MVMYARKQARLSDGCHDRRDSQPYQTLKYSSKSHPSSSDHRHDKMRDSTDPSPPNKMRRSNSPENKYIDSAGHGKAKSMHLHRVRERDGGTSFSPQENSHNHSAIHSSNSHSSTPSKTSDSAYDPADDWSEHISSSGKKYYYNCRTEVSQWEKPKEWLEREQRQKETSKVAVNSFPKDRDYRREAMQAAAAVEEKHSSDTSTMLPQNILSQTSRHNDRDYRLPRTDSHSSAAPVQQPVKAAVHPAAAPSTVPSSPFTVQPDHPPPKKSYDANGAALSKLPTPTSSIPVPKSERKETASSDKSSCTTPSTSSAPGLNLSAAPPSSSSSTVPVSPVPQSPIPPILQDPNLLRQLLPALQATLQLNNSNVDISKINEAAVTQASLQSILHKILTAGPSAFNITSLISQVAQLSAQAAQSNQSPMSLTSDASSPRSYVSPRISTPQTNTVPHKPLLSTPPVTSQPKVGTPGSKQGSSAQTASQQSSAADKSQGHEPTSPRNLQRSSSQRSPSPGPNHNSSTCASSTSAPQNSSARSSCSLTPTLAAYFNENLVKHVQGWPADHAEKQASRLREEAHNMGSIHMSEVCTELKNLRSLVRVCEIQATLREQRILFLRQQIKELEKLKNQNSFMV</sequence>
<proteinExistence type="evidence at transcript level"/>
<name>WAC_XENTR</name>
<reference key="1">
    <citation type="submission" date="2004-10" db="EMBL/GenBank/DDBJ databases">
        <authorList>
            <consortium name="NIH - Xenopus Gene Collection (XGC) project"/>
        </authorList>
    </citation>
    <scope>NUCLEOTIDE SEQUENCE [LARGE SCALE MRNA]</scope>
    <source>
        <tissue>Embryo</tissue>
    </source>
</reference>
<organism>
    <name type="scientific">Xenopus tropicalis</name>
    <name type="common">Western clawed frog</name>
    <name type="synonym">Silurana tropicalis</name>
    <dbReference type="NCBI Taxonomy" id="8364"/>
    <lineage>
        <taxon>Eukaryota</taxon>
        <taxon>Metazoa</taxon>
        <taxon>Chordata</taxon>
        <taxon>Craniata</taxon>
        <taxon>Vertebrata</taxon>
        <taxon>Euteleostomi</taxon>
        <taxon>Amphibia</taxon>
        <taxon>Batrachia</taxon>
        <taxon>Anura</taxon>
        <taxon>Pipoidea</taxon>
        <taxon>Pipidae</taxon>
        <taxon>Xenopodinae</taxon>
        <taxon>Xenopus</taxon>
        <taxon>Silurana</taxon>
    </lineage>
</organism>
<evidence type="ECO:0000250" key="1">
    <source>
        <dbReference type="UniProtKB" id="Q9BTA9"/>
    </source>
</evidence>
<evidence type="ECO:0000255" key="2"/>
<evidence type="ECO:0000255" key="3">
    <source>
        <dbReference type="PROSITE-ProRule" id="PRU00224"/>
    </source>
</evidence>
<evidence type="ECO:0000256" key="4">
    <source>
        <dbReference type="SAM" id="MobiDB-lite"/>
    </source>
</evidence>
<dbReference type="EMBL" id="BC084997">
    <property type="protein sequence ID" value="AAH84997.1"/>
    <property type="molecule type" value="mRNA"/>
</dbReference>
<dbReference type="RefSeq" id="NP_001011171.1">
    <property type="nucleotide sequence ID" value="NM_001011171.1"/>
</dbReference>
<dbReference type="SMR" id="Q5U4Q0"/>
<dbReference type="FunCoup" id="Q5U4Q0">
    <property type="interactions" value="5133"/>
</dbReference>
<dbReference type="STRING" id="8364.ENSXETP00000042893"/>
<dbReference type="PaxDb" id="8364-ENSXETP00000059493"/>
<dbReference type="DNASU" id="496589"/>
<dbReference type="GeneID" id="496589"/>
<dbReference type="KEGG" id="xtr:496589"/>
<dbReference type="AGR" id="Xenbase:XB-GENE-6258902"/>
<dbReference type="CTD" id="51322"/>
<dbReference type="Xenbase" id="XB-GENE-6258902">
    <property type="gene designation" value="wac"/>
</dbReference>
<dbReference type="eggNOG" id="KOG0152">
    <property type="taxonomic scope" value="Eukaryota"/>
</dbReference>
<dbReference type="InParanoid" id="Q5U4Q0"/>
<dbReference type="OrthoDB" id="10072039at2759"/>
<dbReference type="Reactome" id="R-XTR-8866654">
    <property type="pathway name" value="E3 ubiquitin ligases ubiquitinate target proteins"/>
</dbReference>
<dbReference type="Proteomes" id="UP000008143">
    <property type="component" value="Chromosome 6"/>
</dbReference>
<dbReference type="Bgee" id="ENSXETG00000004545">
    <property type="expression patterns" value="Expressed in testis and 17 other cell types or tissues"/>
</dbReference>
<dbReference type="GO" id="GO:0005634">
    <property type="term" value="C:nucleus"/>
    <property type="evidence" value="ECO:0007669"/>
    <property type="project" value="UniProtKB-SubCell"/>
</dbReference>
<dbReference type="GO" id="GO:0003682">
    <property type="term" value="F:chromatin binding"/>
    <property type="evidence" value="ECO:0000250"/>
    <property type="project" value="UniProtKB"/>
</dbReference>
<dbReference type="GO" id="GO:0000993">
    <property type="term" value="F:RNA polymerase II complex binding"/>
    <property type="evidence" value="ECO:0000250"/>
    <property type="project" value="UniProtKB"/>
</dbReference>
<dbReference type="GO" id="GO:0006338">
    <property type="term" value="P:chromatin remodeling"/>
    <property type="evidence" value="ECO:0000250"/>
    <property type="project" value="UniProtKB"/>
</dbReference>
<dbReference type="GO" id="GO:0006974">
    <property type="term" value="P:DNA damage response"/>
    <property type="evidence" value="ECO:0000250"/>
    <property type="project" value="UniProtKB"/>
</dbReference>
<dbReference type="GO" id="GO:0031571">
    <property type="term" value="P:mitotic G1 DNA damage checkpoint signaling"/>
    <property type="evidence" value="ECO:0000250"/>
    <property type="project" value="UniProtKB"/>
</dbReference>
<dbReference type="GO" id="GO:0045893">
    <property type="term" value="P:positive regulation of DNA-templated transcription"/>
    <property type="evidence" value="ECO:0000250"/>
    <property type="project" value="UniProtKB"/>
</dbReference>
<dbReference type="CDD" id="cd00201">
    <property type="entry name" value="WW"/>
    <property type="match status" value="1"/>
</dbReference>
<dbReference type="FunFam" id="2.20.70.10:FF:000020">
    <property type="entry name" value="WW domain-containing adapter protein with coiled-coil isoform X1"/>
    <property type="match status" value="1"/>
</dbReference>
<dbReference type="Gene3D" id="2.20.70.10">
    <property type="match status" value="1"/>
</dbReference>
<dbReference type="InterPro" id="IPR038867">
    <property type="entry name" value="WAC"/>
</dbReference>
<dbReference type="InterPro" id="IPR001202">
    <property type="entry name" value="WW_dom"/>
</dbReference>
<dbReference type="InterPro" id="IPR036020">
    <property type="entry name" value="WW_dom_sf"/>
</dbReference>
<dbReference type="PANTHER" id="PTHR15911">
    <property type="entry name" value="WW DOMAIN-CONTAINING ADAPTER PROTEIN WITH COILED-COIL"/>
    <property type="match status" value="1"/>
</dbReference>
<dbReference type="PANTHER" id="PTHR15911:SF6">
    <property type="entry name" value="WW DOMAIN-CONTAINING ADAPTER PROTEIN WITH COILED-COIL"/>
    <property type="match status" value="1"/>
</dbReference>
<dbReference type="Pfam" id="PF00397">
    <property type="entry name" value="WW"/>
    <property type="match status" value="1"/>
</dbReference>
<dbReference type="SMART" id="SM00456">
    <property type="entry name" value="WW"/>
    <property type="match status" value="1"/>
</dbReference>
<dbReference type="SUPFAM" id="SSF51045">
    <property type="entry name" value="WW domain"/>
    <property type="match status" value="1"/>
</dbReference>
<dbReference type="PROSITE" id="PS01159">
    <property type="entry name" value="WW_DOMAIN_1"/>
    <property type="match status" value="1"/>
</dbReference>
<dbReference type="PROSITE" id="PS50020">
    <property type="entry name" value="WW_DOMAIN_2"/>
    <property type="match status" value="1"/>
</dbReference>
<feature type="chain" id="PRO_0000406982" description="WW domain-containing adapter protein with coiled-coil">
    <location>
        <begin position="1"/>
        <end position="628"/>
    </location>
</feature>
<feature type="domain" description="WW" evidence="3">
    <location>
        <begin position="123"/>
        <end position="156"/>
    </location>
</feature>
<feature type="region of interest" description="Disordered" evidence="4">
    <location>
        <begin position="1"/>
        <end position="130"/>
    </location>
</feature>
<feature type="region of interest" description="Disordered" evidence="4">
    <location>
        <begin position="152"/>
        <end position="338"/>
    </location>
</feature>
<feature type="region of interest" description="Disordered" evidence="4">
    <location>
        <begin position="417"/>
        <end position="532"/>
    </location>
</feature>
<feature type="coiled-coil region" evidence="2">
    <location>
        <begin position="599"/>
        <end position="625"/>
    </location>
</feature>
<feature type="compositionally biased region" description="Basic and acidic residues" evidence="4">
    <location>
        <begin position="37"/>
        <end position="49"/>
    </location>
</feature>
<feature type="compositionally biased region" description="Basic residues" evidence="4">
    <location>
        <begin position="74"/>
        <end position="84"/>
    </location>
</feature>
<feature type="compositionally biased region" description="Low complexity" evidence="4">
    <location>
        <begin position="101"/>
        <end position="121"/>
    </location>
</feature>
<feature type="compositionally biased region" description="Basic and acidic residues" evidence="4">
    <location>
        <begin position="152"/>
        <end position="168"/>
    </location>
</feature>
<feature type="compositionally biased region" description="Basic and acidic residues" evidence="4">
    <location>
        <begin position="176"/>
        <end position="185"/>
    </location>
</feature>
<feature type="compositionally biased region" description="Polar residues" evidence="4">
    <location>
        <begin position="199"/>
        <end position="213"/>
    </location>
</feature>
<feature type="compositionally biased region" description="Basic and acidic residues" evidence="4">
    <location>
        <begin position="214"/>
        <end position="227"/>
    </location>
</feature>
<feature type="compositionally biased region" description="Low complexity" evidence="4">
    <location>
        <begin position="230"/>
        <end position="260"/>
    </location>
</feature>
<feature type="compositionally biased region" description="Low complexity" evidence="4">
    <location>
        <begin position="299"/>
        <end position="331"/>
    </location>
</feature>
<feature type="compositionally biased region" description="Polar residues" evidence="4">
    <location>
        <begin position="420"/>
        <end position="446"/>
    </location>
</feature>
<feature type="compositionally biased region" description="Low complexity" evidence="4">
    <location>
        <begin position="467"/>
        <end position="486"/>
    </location>
</feature>
<feature type="compositionally biased region" description="Polar residues" evidence="4">
    <location>
        <begin position="511"/>
        <end position="532"/>
    </location>
</feature>
<protein>
    <recommendedName>
        <fullName>WW domain-containing adapter protein with coiled-coil</fullName>
    </recommendedName>
</protein>
<gene>
    <name type="primary">wac</name>
</gene>
<accession>Q5U4Q0</accession>
<comment type="function">
    <text evidence="1">Acts as a linker between gene transcription and histone H2B monoubiquitination at 'Lys-120' (H2BK120ub1). Positive regulator of amino acid starvation-induced autophagy. Positively regulates MTOR activity. May negatively regulate the ubiquitin proteasome pathway.</text>
</comment>
<comment type="subcellular location">
    <subcellularLocation>
        <location evidence="1">Nucleus</location>
    </subcellularLocation>
</comment>
<keyword id="KW-0156">Chromatin regulator</keyword>
<keyword id="KW-0175">Coiled coil</keyword>
<keyword id="KW-0539">Nucleus</keyword>
<keyword id="KW-1185">Reference proteome</keyword>
<keyword id="KW-0804">Transcription</keyword>
<keyword id="KW-0805">Transcription regulation</keyword>